<evidence type="ECO:0000250" key="1"/>
<evidence type="ECO:0000255" key="2">
    <source>
        <dbReference type="PROSITE-ProRule" id="PRU00448"/>
    </source>
</evidence>
<evidence type="ECO:0000256" key="3">
    <source>
        <dbReference type="SAM" id="MobiDB-lite"/>
    </source>
</evidence>
<evidence type="ECO:0000269" key="4">
    <source>
    </source>
</evidence>
<evidence type="ECO:0000305" key="5"/>
<name>RPTN_HUMAN</name>
<sequence length="784" mass="90731">MAQLLNSILSVIDVFHKYAKGNGDCALLCKEELKQLLLAEFGDILQRPNDPETVETILNLLDQDRDGHIDFHEYLLLVFQLVQACYHKLDNKSHGGRTSQQERGQEGAQDCKFPGNTGRQHRQRHEEERQNSHHSQPERQDGDSHHGQPERQDRDSHHGQSEKQDRDSHHSQPERQDRDSHHNQSERQDKDFSFDQSERQSQDSSSGKKVSHKSTSGQAKWQGHIFALNRCEKPIQDSHYGQSERHTQQSETLGQASHFNQTNQQKSGSYCGQSERLGQELGCGQTDRQGQSSHYGQTDRQDQSYHYGQTDRQGQSSHYSQTDRQGQSSHYSQPDRQGQSSHYGQMDRKGQCYHYDQTNRQGQGSHYSQPNRQGQSSHYGQPDTQDQSSHYGQTDRQDQSSHYGQTERQGQSSHYSQMDRQGQGSHYGQTDRQGQSSHYGQPDRQGQNSHYGQTDRQGQSSHYGQTDRQGQSSHYSQPDKQGQSSHYGKIDRQDQSYHYGQPDGQGQSSHYGQTDRQGQSFHYGQPDRQGQSSHYSQMDRQGQSSHYGQTDRQGQSSHYGQTDRQGQSYHYGQTDRQGQSSHYIQSQTGEIQGQNKYFQGTEGTRKASYVEQSGRSGRLSQQTPGQEGYQNQGQGFQSRDSQQNGHQVWEPEEDSQHHQHKLLAQIQQERPLCHKGRDWQSCSSEQGHRQAQTRQSHGEGLSHWAEEEQGHQTWDRHSHESQEGPCGTQDRRTHKDEQNHQRRDRQTHEHEQSHQRRDRQTHEDKQNRQRRDRQTHEDEQNHQR</sequence>
<feature type="chain" id="PRO_0000144040" description="Repetin">
    <location>
        <begin position="1"/>
        <end position="784"/>
    </location>
</feature>
<feature type="domain" description="EF-hand 1" evidence="5">
    <location>
        <begin position="13"/>
        <end position="48"/>
    </location>
</feature>
<feature type="domain" description="EF-hand 2" evidence="2">
    <location>
        <begin position="49"/>
        <end position="84"/>
    </location>
</feature>
<feature type="region of interest" description="S-100-like" evidence="1">
    <location>
        <begin position="1"/>
        <end position="91"/>
    </location>
</feature>
<feature type="region of interest" description="Disordered" evidence="3">
    <location>
        <begin position="92"/>
        <end position="221"/>
    </location>
</feature>
<feature type="region of interest" description="Disordered" evidence="3">
    <location>
        <begin position="282"/>
        <end position="584"/>
    </location>
</feature>
<feature type="region of interest" description="Disordered" evidence="3">
    <location>
        <begin position="601"/>
        <end position="661"/>
    </location>
</feature>
<feature type="region of interest" description="Disordered" evidence="3">
    <location>
        <begin position="677"/>
        <end position="784"/>
    </location>
</feature>
<feature type="compositionally biased region" description="Basic and acidic residues" evidence="3">
    <location>
        <begin position="124"/>
        <end position="201"/>
    </location>
</feature>
<feature type="compositionally biased region" description="Polar residues" evidence="3">
    <location>
        <begin position="286"/>
        <end position="296"/>
    </location>
</feature>
<feature type="compositionally biased region" description="Polar residues" evidence="3">
    <location>
        <begin position="304"/>
        <end position="343"/>
    </location>
</feature>
<feature type="compositionally biased region" description="Polar residues" evidence="3">
    <location>
        <begin position="356"/>
        <end position="392"/>
    </location>
</feature>
<feature type="compositionally biased region" description="Polar residues" evidence="3">
    <location>
        <begin position="400"/>
        <end position="486"/>
    </location>
</feature>
<feature type="compositionally biased region" description="Polar residues" evidence="3">
    <location>
        <begin position="504"/>
        <end position="584"/>
    </location>
</feature>
<feature type="compositionally biased region" description="Polar residues" evidence="3">
    <location>
        <begin position="610"/>
        <end position="646"/>
    </location>
</feature>
<feature type="compositionally biased region" description="Polar residues" evidence="3">
    <location>
        <begin position="680"/>
        <end position="695"/>
    </location>
</feature>
<feature type="compositionally biased region" description="Basic and acidic residues" evidence="3">
    <location>
        <begin position="704"/>
        <end position="722"/>
    </location>
</feature>
<feature type="compositionally biased region" description="Basic and acidic residues" evidence="3">
    <location>
        <begin position="729"/>
        <end position="784"/>
    </location>
</feature>
<feature type="binding site" evidence="5">
    <location>
        <position position="32"/>
    </location>
    <ligand>
        <name>Ca(2+)</name>
        <dbReference type="ChEBI" id="CHEBI:29108"/>
        <label>1</label>
        <note>low affinity</note>
    </ligand>
</feature>
<feature type="binding site" evidence="2">
    <location>
        <position position="62"/>
    </location>
    <ligand>
        <name>Ca(2+)</name>
        <dbReference type="ChEBI" id="CHEBI:29108"/>
        <label>2</label>
        <note>high affinity</note>
    </ligand>
</feature>
<feature type="binding site" evidence="2">
    <location>
        <position position="64"/>
    </location>
    <ligand>
        <name>Ca(2+)</name>
        <dbReference type="ChEBI" id="CHEBI:29108"/>
        <label>2</label>
        <note>high affinity</note>
    </ligand>
</feature>
<feature type="binding site" evidence="2">
    <location>
        <position position="66"/>
    </location>
    <ligand>
        <name>Ca(2+)</name>
        <dbReference type="ChEBI" id="CHEBI:29108"/>
        <label>2</label>
        <note>high affinity</note>
    </ligand>
</feature>
<feature type="binding site" evidence="2">
    <location>
        <position position="68"/>
    </location>
    <ligand>
        <name>Ca(2+)</name>
        <dbReference type="ChEBI" id="CHEBI:29108"/>
        <label>2</label>
        <note>high affinity</note>
    </ligand>
</feature>
<feature type="binding site" evidence="2">
    <location>
        <position position="73"/>
    </location>
    <ligand>
        <name>Ca(2+)</name>
        <dbReference type="ChEBI" id="CHEBI:29108"/>
        <label>2</label>
        <note>high affinity</note>
    </ligand>
</feature>
<feature type="sequence variant" id="VAR_059177" description="In dbSNP:rs12117644.">
    <original>S</original>
    <variation>G</variation>
    <location>
        <position position="320"/>
    </location>
</feature>
<organism>
    <name type="scientific">Homo sapiens</name>
    <name type="common">Human</name>
    <dbReference type="NCBI Taxonomy" id="9606"/>
    <lineage>
        <taxon>Eukaryota</taxon>
        <taxon>Metazoa</taxon>
        <taxon>Chordata</taxon>
        <taxon>Craniata</taxon>
        <taxon>Vertebrata</taxon>
        <taxon>Euteleostomi</taxon>
        <taxon>Mammalia</taxon>
        <taxon>Eutheria</taxon>
        <taxon>Euarchontoglires</taxon>
        <taxon>Primates</taxon>
        <taxon>Haplorrhini</taxon>
        <taxon>Catarrhini</taxon>
        <taxon>Hominidae</taxon>
        <taxon>Homo</taxon>
    </lineage>
</organism>
<reference key="1">
    <citation type="submission" date="2003-09" db="EMBL/GenBank/DDBJ databases">
        <title>Human intermediate filament-associated protein family.</title>
        <authorList>
            <person name="Wu Z."/>
            <person name="Schroeder J.M."/>
        </authorList>
    </citation>
    <scope>NUCLEOTIDE SEQUENCE [MRNA]</scope>
    <source>
        <tissue>Skin</tissue>
    </source>
</reference>
<reference key="2">
    <citation type="journal article" date="2005" name="J. Invest. Dermatol.">
        <title>Isolation and characterization of human repetin, a member of the fused gene family of the epidermal differentiation complex.</title>
        <authorList>
            <person name="Huber M."/>
            <person name="Siegenthaler G."/>
            <person name="Mirancea N."/>
            <person name="Marenholz I."/>
            <person name="Nizetic D."/>
            <person name="Breitkreutz D."/>
            <person name="Mischke D."/>
            <person name="Hohl D."/>
        </authorList>
    </citation>
    <scope>NUCLEOTIDE SEQUENCE [GENOMIC DNA]</scope>
    <scope>CALCIUM-BINDING</scope>
    <scope>TISSUE SPECIFICITY</scope>
</reference>
<reference key="3">
    <citation type="journal article" date="2006" name="Nature">
        <title>The DNA sequence and biological annotation of human chromosome 1.</title>
        <authorList>
            <person name="Gregory S.G."/>
            <person name="Barlow K.F."/>
            <person name="McLay K.E."/>
            <person name="Kaul R."/>
            <person name="Swarbreck D."/>
            <person name="Dunham A."/>
            <person name="Scott C.E."/>
            <person name="Howe K.L."/>
            <person name="Woodfine K."/>
            <person name="Spencer C.C.A."/>
            <person name="Jones M.C."/>
            <person name="Gillson C."/>
            <person name="Searle S."/>
            <person name="Zhou Y."/>
            <person name="Kokocinski F."/>
            <person name="McDonald L."/>
            <person name="Evans R."/>
            <person name="Phillips K."/>
            <person name="Atkinson A."/>
            <person name="Cooper R."/>
            <person name="Jones C."/>
            <person name="Hall R.E."/>
            <person name="Andrews T.D."/>
            <person name="Lloyd C."/>
            <person name="Ainscough R."/>
            <person name="Almeida J.P."/>
            <person name="Ambrose K.D."/>
            <person name="Anderson F."/>
            <person name="Andrew R.W."/>
            <person name="Ashwell R.I.S."/>
            <person name="Aubin K."/>
            <person name="Babbage A.K."/>
            <person name="Bagguley C.L."/>
            <person name="Bailey J."/>
            <person name="Beasley H."/>
            <person name="Bethel G."/>
            <person name="Bird C.P."/>
            <person name="Bray-Allen S."/>
            <person name="Brown J.Y."/>
            <person name="Brown A.J."/>
            <person name="Buckley D."/>
            <person name="Burton J."/>
            <person name="Bye J."/>
            <person name="Carder C."/>
            <person name="Chapman J.C."/>
            <person name="Clark S.Y."/>
            <person name="Clarke G."/>
            <person name="Clee C."/>
            <person name="Cobley V."/>
            <person name="Collier R.E."/>
            <person name="Corby N."/>
            <person name="Coville G.J."/>
            <person name="Davies J."/>
            <person name="Deadman R."/>
            <person name="Dunn M."/>
            <person name="Earthrowl M."/>
            <person name="Ellington A.G."/>
            <person name="Errington H."/>
            <person name="Frankish A."/>
            <person name="Frankland J."/>
            <person name="French L."/>
            <person name="Garner P."/>
            <person name="Garnett J."/>
            <person name="Gay L."/>
            <person name="Ghori M.R.J."/>
            <person name="Gibson R."/>
            <person name="Gilby L.M."/>
            <person name="Gillett W."/>
            <person name="Glithero R.J."/>
            <person name="Grafham D.V."/>
            <person name="Griffiths C."/>
            <person name="Griffiths-Jones S."/>
            <person name="Grocock R."/>
            <person name="Hammond S."/>
            <person name="Harrison E.S.I."/>
            <person name="Hart E."/>
            <person name="Haugen E."/>
            <person name="Heath P.D."/>
            <person name="Holmes S."/>
            <person name="Holt K."/>
            <person name="Howden P.J."/>
            <person name="Hunt A.R."/>
            <person name="Hunt S.E."/>
            <person name="Hunter G."/>
            <person name="Isherwood J."/>
            <person name="James R."/>
            <person name="Johnson C."/>
            <person name="Johnson D."/>
            <person name="Joy A."/>
            <person name="Kay M."/>
            <person name="Kershaw J.K."/>
            <person name="Kibukawa M."/>
            <person name="Kimberley A.M."/>
            <person name="King A."/>
            <person name="Knights A.J."/>
            <person name="Lad H."/>
            <person name="Laird G."/>
            <person name="Lawlor S."/>
            <person name="Leongamornlert D.A."/>
            <person name="Lloyd D.M."/>
            <person name="Loveland J."/>
            <person name="Lovell J."/>
            <person name="Lush M.J."/>
            <person name="Lyne R."/>
            <person name="Martin S."/>
            <person name="Mashreghi-Mohammadi M."/>
            <person name="Matthews L."/>
            <person name="Matthews N.S.W."/>
            <person name="McLaren S."/>
            <person name="Milne S."/>
            <person name="Mistry S."/>
            <person name="Moore M.J.F."/>
            <person name="Nickerson T."/>
            <person name="O'Dell C.N."/>
            <person name="Oliver K."/>
            <person name="Palmeiri A."/>
            <person name="Palmer S.A."/>
            <person name="Parker A."/>
            <person name="Patel D."/>
            <person name="Pearce A.V."/>
            <person name="Peck A.I."/>
            <person name="Pelan S."/>
            <person name="Phelps K."/>
            <person name="Phillimore B.J."/>
            <person name="Plumb R."/>
            <person name="Rajan J."/>
            <person name="Raymond C."/>
            <person name="Rouse G."/>
            <person name="Saenphimmachak C."/>
            <person name="Sehra H.K."/>
            <person name="Sheridan E."/>
            <person name="Shownkeen R."/>
            <person name="Sims S."/>
            <person name="Skuce C.D."/>
            <person name="Smith M."/>
            <person name="Steward C."/>
            <person name="Subramanian S."/>
            <person name="Sycamore N."/>
            <person name="Tracey A."/>
            <person name="Tromans A."/>
            <person name="Van Helmond Z."/>
            <person name="Wall M."/>
            <person name="Wallis J.M."/>
            <person name="White S."/>
            <person name="Whitehead S.L."/>
            <person name="Wilkinson J.E."/>
            <person name="Willey D.L."/>
            <person name="Williams H."/>
            <person name="Wilming L."/>
            <person name="Wray P.W."/>
            <person name="Wu Z."/>
            <person name="Coulson A."/>
            <person name="Vaudin M."/>
            <person name="Sulston J.E."/>
            <person name="Durbin R.M."/>
            <person name="Hubbard T."/>
            <person name="Wooster R."/>
            <person name="Dunham I."/>
            <person name="Carter N.P."/>
            <person name="McVean G."/>
            <person name="Ross M.T."/>
            <person name="Harrow J."/>
            <person name="Olson M.V."/>
            <person name="Beck S."/>
            <person name="Rogers J."/>
            <person name="Bentley D.R."/>
        </authorList>
    </citation>
    <scope>NUCLEOTIDE SEQUENCE [LARGE SCALE GENOMIC DNA]</scope>
</reference>
<protein>
    <recommendedName>
        <fullName>Repetin</fullName>
    </recommendedName>
</protein>
<proteinExistence type="evidence at protein level"/>
<accession>Q6XPR3</accession>
<accession>B7ZBZ3</accession>
<keyword id="KW-0106">Calcium</keyword>
<keyword id="KW-0272">Extracellular matrix</keyword>
<keyword id="KW-0479">Metal-binding</keyword>
<keyword id="KW-1267">Proteomics identification</keyword>
<keyword id="KW-1185">Reference proteome</keyword>
<keyword id="KW-0677">Repeat</keyword>
<keyword id="KW-0964">Secreted</keyword>
<comment type="function">
    <text>Involved in the cornified cell envelope formation. Multifunctional epidermal matrix protein. Reversibly binds calcium.</text>
</comment>
<comment type="subcellular location">
    <subcellularLocation>
        <location>Secreted</location>
        <location>Extracellular space</location>
        <location>Extracellular matrix</location>
    </subcellularLocation>
</comment>
<comment type="tissue specificity">
    <text evidence="4">Expression is scattered in the normal epidermis but strong in the acrosyringium, the inner hair root sheath and in the filiform papilli of the tongue.</text>
</comment>
<comment type="domain">
    <text>Can be divided into a N-terminal domain with significant homology to S100-like calcium-binding proteins, a central domain containing a series of short tandem repeats, and two flanking segments with low homology to the consensus sequences of the central repeats.</text>
</comment>
<comment type="PTM">
    <text>Potential substrate of transglutaminase. Some arginines are probably converted to citrullines by peptidylarginine deimidase.</text>
</comment>
<comment type="similarity">
    <text evidence="5">Belongs to the S100-fused protein family.</text>
</comment>
<dbReference type="EMBL" id="AY396742">
    <property type="protein sequence ID" value="AAR91620.1"/>
    <property type="molecule type" value="mRNA"/>
</dbReference>
<dbReference type="EMBL" id="AY219924">
    <property type="protein sequence ID" value="AAP48705.1"/>
    <property type="molecule type" value="Genomic_DNA"/>
</dbReference>
<dbReference type="EMBL" id="AL589986">
    <property type="status" value="NOT_ANNOTATED_CDS"/>
    <property type="molecule type" value="Genomic_DNA"/>
</dbReference>
<dbReference type="CCDS" id="CCDS41397.1"/>
<dbReference type="RefSeq" id="NP_001116437.1">
    <property type="nucleotide sequence ID" value="NM_001122965.1"/>
</dbReference>
<dbReference type="SMR" id="Q6XPR3"/>
<dbReference type="BioGRID" id="126006">
    <property type="interactions" value="3"/>
</dbReference>
<dbReference type="FunCoup" id="Q6XPR3">
    <property type="interactions" value="20"/>
</dbReference>
<dbReference type="IntAct" id="Q6XPR3">
    <property type="interactions" value="5"/>
</dbReference>
<dbReference type="STRING" id="9606.ENSP00000317895"/>
<dbReference type="GlyGen" id="Q6XPR3">
    <property type="glycosylation" value="3 sites, 1 O-linked glycan (3 sites)"/>
</dbReference>
<dbReference type="iPTMnet" id="Q6XPR3"/>
<dbReference type="PhosphoSitePlus" id="Q6XPR3"/>
<dbReference type="BioMuta" id="RPTN"/>
<dbReference type="DMDM" id="68566036"/>
<dbReference type="jPOST" id="Q6XPR3"/>
<dbReference type="MassIVE" id="Q6XPR3"/>
<dbReference type="PaxDb" id="9606-ENSP00000317895"/>
<dbReference type="PeptideAtlas" id="Q6XPR3"/>
<dbReference type="ProteomicsDB" id="67805"/>
<dbReference type="Antibodypedia" id="34084">
    <property type="antibodies" value="106 antibodies from 23 providers"/>
</dbReference>
<dbReference type="DNASU" id="126638"/>
<dbReference type="Ensembl" id="ENST00000316073.3">
    <property type="protein sequence ID" value="ENSP00000317895.3"/>
    <property type="gene ID" value="ENSG00000215853.3"/>
</dbReference>
<dbReference type="GeneID" id="126638"/>
<dbReference type="KEGG" id="hsa:126638"/>
<dbReference type="MANE-Select" id="ENST00000316073.3">
    <property type="protein sequence ID" value="ENSP00000317895.3"/>
    <property type="RefSeq nucleotide sequence ID" value="NM_001122965.1"/>
    <property type="RefSeq protein sequence ID" value="NP_001116437.1"/>
</dbReference>
<dbReference type="UCSC" id="uc001ezs.1">
    <property type="organism name" value="human"/>
</dbReference>
<dbReference type="AGR" id="HGNC:26809"/>
<dbReference type="CTD" id="126638"/>
<dbReference type="DisGeNET" id="126638"/>
<dbReference type="GeneCards" id="RPTN"/>
<dbReference type="HGNC" id="HGNC:26809">
    <property type="gene designation" value="RPTN"/>
</dbReference>
<dbReference type="HPA" id="ENSG00000215853">
    <property type="expression patterns" value="Tissue enhanced (lymphoid tissue, skin)"/>
</dbReference>
<dbReference type="MIM" id="613259">
    <property type="type" value="gene"/>
</dbReference>
<dbReference type="neXtProt" id="NX_Q6XPR3"/>
<dbReference type="OpenTargets" id="ENSG00000215853"/>
<dbReference type="PharmGKB" id="PA142670970"/>
<dbReference type="VEuPathDB" id="HostDB:ENSG00000215853"/>
<dbReference type="eggNOG" id="ENOG502S86J">
    <property type="taxonomic scope" value="Eukaryota"/>
</dbReference>
<dbReference type="GeneTree" id="ENSGT00940000154467"/>
<dbReference type="HOGENOM" id="CLU_010746_0_0_1"/>
<dbReference type="InParanoid" id="Q6XPR3"/>
<dbReference type="OMA" id="HEDEQNH"/>
<dbReference type="OrthoDB" id="26525at2759"/>
<dbReference type="PAN-GO" id="Q6XPR3">
    <property type="GO annotations" value="1 GO annotation based on evolutionary models"/>
</dbReference>
<dbReference type="PhylomeDB" id="Q6XPR3"/>
<dbReference type="TreeFam" id="TF338665"/>
<dbReference type="PathwayCommons" id="Q6XPR3"/>
<dbReference type="Reactome" id="R-HSA-6809371">
    <property type="pathway name" value="Formation of the cornified envelope"/>
</dbReference>
<dbReference type="SignaLink" id="Q6XPR3"/>
<dbReference type="BioGRID-ORCS" id="126638">
    <property type="hits" value="14 hits in 1135 CRISPR screens"/>
</dbReference>
<dbReference type="GenomeRNAi" id="126638"/>
<dbReference type="Pharos" id="Q6XPR3">
    <property type="development level" value="Tbio"/>
</dbReference>
<dbReference type="PRO" id="PR:Q6XPR3"/>
<dbReference type="Proteomes" id="UP000005640">
    <property type="component" value="Chromosome 1"/>
</dbReference>
<dbReference type="RNAct" id="Q6XPR3">
    <property type="molecule type" value="protein"/>
</dbReference>
<dbReference type="Bgee" id="ENSG00000215853">
    <property type="expression patterns" value="Expressed in gingiva and 49 other cell types or tissues"/>
</dbReference>
<dbReference type="GO" id="GO:0001533">
    <property type="term" value="C:cornified envelope"/>
    <property type="evidence" value="ECO:0000318"/>
    <property type="project" value="GO_Central"/>
</dbReference>
<dbReference type="GO" id="GO:0005829">
    <property type="term" value="C:cytosol"/>
    <property type="evidence" value="ECO:0000304"/>
    <property type="project" value="Reactome"/>
</dbReference>
<dbReference type="GO" id="GO:0005576">
    <property type="term" value="C:extracellular region"/>
    <property type="evidence" value="ECO:0007669"/>
    <property type="project" value="UniProtKB-KW"/>
</dbReference>
<dbReference type="GO" id="GO:0005509">
    <property type="term" value="F:calcium ion binding"/>
    <property type="evidence" value="ECO:0007669"/>
    <property type="project" value="InterPro"/>
</dbReference>
<dbReference type="GO" id="GO:0046914">
    <property type="term" value="F:transition metal ion binding"/>
    <property type="evidence" value="ECO:0007669"/>
    <property type="project" value="InterPro"/>
</dbReference>
<dbReference type="CDD" id="cd00213">
    <property type="entry name" value="S-100"/>
    <property type="match status" value="1"/>
</dbReference>
<dbReference type="FunFam" id="1.10.238.10:FF:000133">
    <property type="entry name" value="Filaggrin"/>
    <property type="match status" value="1"/>
</dbReference>
<dbReference type="Gene3D" id="1.10.238.10">
    <property type="entry name" value="EF-hand"/>
    <property type="match status" value="1"/>
</dbReference>
<dbReference type="InterPro" id="IPR011992">
    <property type="entry name" value="EF-hand-dom_pair"/>
</dbReference>
<dbReference type="InterPro" id="IPR018247">
    <property type="entry name" value="EF_Hand_1_Ca_BS"/>
</dbReference>
<dbReference type="InterPro" id="IPR002048">
    <property type="entry name" value="EF_hand_dom"/>
</dbReference>
<dbReference type="InterPro" id="IPR034325">
    <property type="entry name" value="S-100_dom"/>
</dbReference>
<dbReference type="InterPro" id="IPR001751">
    <property type="entry name" value="S100/CaBP7/8-like_CS"/>
</dbReference>
<dbReference type="InterPro" id="IPR013787">
    <property type="entry name" value="S100_Ca-bd_sub"/>
</dbReference>
<dbReference type="PANTHER" id="PTHR14054">
    <property type="entry name" value="REPETIN"/>
    <property type="match status" value="1"/>
</dbReference>
<dbReference type="PANTHER" id="PTHR14054:SF14">
    <property type="entry name" value="REPETIN"/>
    <property type="match status" value="1"/>
</dbReference>
<dbReference type="Pfam" id="PF01023">
    <property type="entry name" value="S_100"/>
    <property type="match status" value="1"/>
</dbReference>
<dbReference type="SMART" id="SM01394">
    <property type="entry name" value="S_100"/>
    <property type="match status" value="1"/>
</dbReference>
<dbReference type="SUPFAM" id="SSF47473">
    <property type="entry name" value="EF-hand"/>
    <property type="match status" value="1"/>
</dbReference>
<dbReference type="PROSITE" id="PS00018">
    <property type="entry name" value="EF_HAND_1"/>
    <property type="match status" value="1"/>
</dbReference>
<dbReference type="PROSITE" id="PS50222">
    <property type="entry name" value="EF_HAND_2"/>
    <property type="match status" value="1"/>
</dbReference>
<dbReference type="PROSITE" id="PS00303">
    <property type="entry name" value="S100_CABP"/>
    <property type="match status" value="1"/>
</dbReference>
<gene>
    <name type="primary">RPTN</name>
</gene>